<sequence length="336" mass="37436">MEIIKTLGEFIIDRQKDYPDASGELTSLFSSIRLAAKILHREINKAGLADITGAAGDENVQGEQQQKLDVYANERFKNALAQRGVVCGIASEEEEQFVRFEETKNLGGKYVVLIDPLDGSSNIDVNVSVGTIFSVYRRVSPEGEHVTEEDFLQPGHKQIAAGYIIYGSSTMLVYTTGNGVNGFTYDPTIGVFCLSHPNLRIPEDGTIYSINEGNYIHFPEGVKKYIKFCQEEDDATQRPYTSRYIGSLVSDFHRNLIKGGIYLYPTSSRYPEGKLRLLYECNPMAFLIEQAGGKAIANPGQRILDIEPTKLHQRCPLFVGSPKMVDKLEQFISELG</sequence>
<dbReference type="EC" id="3.1.3.11" evidence="1"/>
<dbReference type="EMBL" id="CP000155">
    <property type="protein sequence ID" value="ABC33091.1"/>
    <property type="molecule type" value="Genomic_DNA"/>
</dbReference>
<dbReference type="RefSeq" id="WP_011400143.1">
    <property type="nucleotide sequence ID" value="NC_007645.1"/>
</dbReference>
<dbReference type="SMR" id="Q2S8D3"/>
<dbReference type="STRING" id="349521.HCH_06446"/>
<dbReference type="KEGG" id="hch:HCH_06446"/>
<dbReference type="eggNOG" id="COG0158">
    <property type="taxonomic scope" value="Bacteria"/>
</dbReference>
<dbReference type="HOGENOM" id="CLU_039977_2_2_6"/>
<dbReference type="OrthoDB" id="9806756at2"/>
<dbReference type="UniPathway" id="UPA00138"/>
<dbReference type="Proteomes" id="UP000000238">
    <property type="component" value="Chromosome"/>
</dbReference>
<dbReference type="GO" id="GO:0005829">
    <property type="term" value="C:cytosol"/>
    <property type="evidence" value="ECO:0007669"/>
    <property type="project" value="TreeGrafter"/>
</dbReference>
<dbReference type="GO" id="GO:0042132">
    <property type="term" value="F:fructose 1,6-bisphosphate 1-phosphatase activity"/>
    <property type="evidence" value="ECO:0007669"/>
    <property type="project" value="UniProtKB-UniRule"/>
</dbReference>
<dbReference type="GO" id="GO:0000287">
    <property type="term" value="F:magnesium ion binding"/>
    <property type="evidence" value="ECO:0007669"/>
    <property type="project" value="UniProtKB-UniRule"/>
</dbReference>
<dbReference type="GO" id="GO:0030388">
    <property type="term" value="P:fructose 1,6-bisphosphate metabolic process"/>
    <property type="evidence" value="ECO:0007669"/>
    <property type="project" value="TreeGrafter"/>
</dbReference>
<dbReference type="GO" id="GO:0006002">
    <property type="term" value="P:fructose 6-phosphate metabolic process"/>
    <property type="evidence" value="ECO:0007669"/>
    <property type="project" value="TreeGrafter"/>
</dbReference>
<dbReference type="GO" id="GO:0006000">
    <property type="term" value="P:fructose metabolic process"/>
    <property type="evidence" value="ECO:0007669"/>
    <property type="project" value="TreeGrafter"/>
</dbReference>
<dbReference type="GO" id="GO:0006094">
    <property type="term" value="P:gluconeogenesis"/>
    <property type="evidence" value="ECO:0007669"/>
    <property type="project" value="UniProtKB-UniRule"/>
</dbReference>
<dbReference type="GO" id="GO:0005986">
    <property type="term" value="P:sucrose biosynthetic process"/>
    <property type="evidence" value="ECO:0007669"/>
    <property type="project" value="TreeGrafter"/>
</dbReference>
<dbReference type="CDD" id="cd00354">
    <property type="entry name" value="FBPase"/>
    <property type="match status" value="1"/>
</dbReference>
<dbReference type="FunFam" id="3.30.540.10:FF:000002">
    <property type="entry name" value="Fructose-1,6-bisphosphatase class 1"/>
    <property type="match status" value="1"/>
</dbReference>
<dbReference type="FunFam" id="3.40.190.80:FF:000001">
    <property type="entry name" value="Fructose-1,6-bisphosphatase class 1"/>
    <property type="match status" value="1"/>
</dbReference>
<dbReference type="Gene3D" id="3.40.190.80">
    <property type="match status" value="1"/>
</dbReference>
<dbReference type="Gene3D" id="3.30.540.10">
    <property type="entry name" value="Fructose-1,6-Bisphosphatase, subunit A, domain 1"/>
    <property type="match status" value="1"/>
</dbReference>
<dbReference type="HAMAP" id="MF_01855">
    <property type="entry name" value="FBPase_class1"/>
    <property type="match status" value="1"/>
</dbReference>
<dbReference type="InterPro" id="IPR044015">
    <property type="entry name" value="FBPase_C_dom"/>
</dbReference>
<dbReference type="InterPro" id="IPR000146">
    <property type="entry name" value="FBPase_class-1"/>
</dbReference>
<dbReference type="InterPro" id="IPR033391">
    <property type="entry name" value="FBPase_N"/>
</dbReference>
<dbReference type="InterPro" id="IPR028343">
    <property type="entry name" value="FBPtase"/>
</dbReference>
<dbReference type="InterPro" id="IPR020548">
    <property type="entry name" value="Fructose_bisphosphatase_AS"/>
</dbReference>
<dbReference type="NCBIfam" id="NF006778">
    <property type="entry name" value="PRK09293.1-1"/>
    <property type="match status" value="1"/>
</dbReference>
<dbReference type="NCBIfam" id="NF006779">
    <property type="entry name" value="PRK09293.1-3"/>
    <property type="match status" value="1"/>
</dbReference>
<dbReference type="PANTHER" id="PTHR11556">
    <property type="entry name" value="FRUCTOSE-1,6-BISPHOSPHATASE-RELATED"/>
    <property type="match status" value="1"/>
</dbReference>
<dbReference type="PANTHER" id="PTHR11556:SF35">
    <property type="entry name" value="SEDOHEPTULOSE-1,7-BISPHOSPHATASE, CHLOROPLASTIC"/>
    <property type="match status" value="1"/>
</dbReference>
<dbReference type="Pfam" id="PF00316">
    <property type="entry name" value="FBPase"/>
    <property type="match status" value="1"/>
</dbReference>
<dbReference type="Pfam" id="PF18913">
    <property type="entry name" value="FBPase_C"/>
    <property type="match status" value="1"/>
</dbReference>
<dbReference type="PIRSF" id="PIRSF500210">
    <property type="entry name" value="FBPtase"/>
    <property type="match status" value="1"/>
</dbReference>
<dbReference type="PIRSF" id="PIRSF000904">
    <property type="entry name" value="FBPtase_SBPase"/>
    <property type="match status" value="1"/>
</dbReference>
<dbReference type="PRINTS" id="PR00115">
    <property type="entry name" value="F16BPHPHTASE"/>
</dbReference>
<dbReference type="SUPFAM" id="SSF56655">
    <property type="entry name" value="Carbohydrate phosphatase"/>
    <property type="match status" value="1"/>
</dbReference>
<dbReference type="PROSITE" id="PS00124">
    <property type="entry name" value="FBPASE"/>
    <property type="match status" value="1"/>
</dbReference>
<proteinExistence type="inferred from homology"/>
<name>F16PA_HAHCH</name>
<keyword id="KW-0119">Carbohydrate metabolism</keyword>
<keyword id="KW-0963">Cytoplasm</keyword>
<keyword id="KW-0378">Hydrolase</keyword>
<keyword id="KW-0460">Magnesium</keyword>
<keyword id="KW-0479">Metal-binding</keyword>
<keyword id="KW-1185">Reference proteome</keyword>
<gene>
    <name evidence="1" type="primary">fbp</name>
    <name type="ordered locus">HCH_06446</name>
</gene>
<feature type="chain" id="PRO_0000364570" description="Fructose-1,6-bisphosphatase class 1">
    <location>
        <begin position="1"/>
        <end position="336"/>
    </location>
</feature>
<feature type="binding site" evidence="1">
    <location>
        <position position="92"/>
    </location>
    <ligand>
        <name>Mg(2+)</name>
        <dbReference type="ChEBI" id="CHEBI:18420"/>
        <label>1</label>
    </ligand>
</feature>
<feature type="binding site" evidence="1">
    <location>
        <position position="115"/>
    </location>
    <ligand>
        <name>Mg(2+)</name>
        <dbReference type="ChEBI" id="CHEBI:18420"/>
        <label>1</label>
    </ligand>
</feature>
<feature type="binding site" evidence="1">
    <location>
        <position position="115"/>
    </location>
    <ligand>
        <name>Mg(2+)</name>
        <dbReference type="ChEBI" id="CHEBI:18420"/>
        <label>2</label>
    </ligand>
</feature>
<feature type="binding site" evidence="1">
    <location>
        <position position="117"/>
    </location>
    <ligand>
        <name>Mg(2+)</name>
        <dbReference type="ChEBI" id="CHEBI:18420"/>
        <label>1</label>
    </ligand>
</feature>
<feature type="binding site" evidence="1">
    <location>
        <begin position="118"/>
        <end position="121"/>
    </location>
    <ligand>
        <name>substrate</name>
    </ligand>
</feature>
<feature type="binding site" evidence="1">
    <location>
        <position position="118"/>
    </location>
    <ligand>
        <name>Mg(2+)</name>
        <dbReference type="ChEBI" id="CHEBI:18420"/>
        <label>2</label>
    </ligand>
</feature>
<feature type="binding site" evidence="1">
    <location>
        <position position="211"/>
    </location>
    <ligand>
        <name>substrate</name>
    </ligand>
</feature>
<feature type="binding site" evidence="1">
    <location>
        <position position="244"/>
    </location>
    <ligand>
        <name>substrate</name>
    </ligand>
</feature>
<feature type="binding site" evidence="1">
    <location>
        <begin position="262"/>
        <end position="264"/>
    </location>
    <ligand>
        <name>substrate</name>
    </ligand>
</feature>
<feature type="binding site" evidence="1">
    <location>
        <position position="274"/>
    </location>
    <ligand>
        <name>substrate</name>
    </ligand>
</feature>
<feature type="binding site" evidence="1">
    <location>
        <position position="280"/>
    </location>
    <ligand>
        <name>Mg(2+)</name>
        <dbReference type="ChEBI" id="CHEBI:18420"/>
        <label>2</label>
    </ligand>
</feature>
<organism>
    <name type="scientific">Hahella chejuensis (strain KCTC 2396)</name>
    <dbReference type="NCBI Taxonomy" id="349521"/>
    <lineage>
        <taxon>Bacteria</taxon>
        <taxon>Pseudomonadati</taxon>
        <taxon>Pseudomonadota</taxon>
        <taxon>Gammaproteobacteria</taxon>
        <taxon>Oceanospirillales</taxon>
        <taxon>Hahellaceae</taxon>
        <taxon>Hahella</taxon>
    </lineage>
</organism>
<comment type="catalytic activity">
    <reaction evidence="1">
        <text>beta-D-fructose 1,6-bisphosphate + H2O = beta-D-fructose 6-phosphate + phosphate</text>
        <dbReference type="Rhea" id="RHEA:11064"/>
        <dbReference type="ChEBI" id="CHEBI:15377"/>
        <dbReference type="ChEBI" id="CHEBI:32966"/>
        <dbReference type="ChEBI" id="CHEBI:43474"/>
        <dbReference type="ChEBI" id="CHEBI:57634"/>
        <dbReference type="EC" id="3.1.3.11"/>
    </reaction>
</comment>
<comment type="cofactor">
    <cofactor evidence="1">
        <name>Mg(2+)</name>
        <dbReference type="ChEBI" id="CHEBI:18420"/>
    </cofactor>
    <text evidence="1">Binds 2 magnesium ions per subunit.</text>
</comment>
<comment type="pathway">
    <text evidence="1">Carbohydrate biosynthesis; gluconeogenesis.</text>
</comment>
<comment type="subunit">
    <text evidence="1">Homotetramer.</text>
</comment>
<comment type="subcellular location">
    <subcellularLocation>
        <location evidence="1">Cytoplasm</location>
    </subcellularLocation>
</comment>
<comment type="similarity">
    <text evidence="1">Belongs to the FBPase class 1 family.</text>
</comment>
<accession>Q2S8D3</accession>
<evidence type="ECO:0000255" key="1">
    <source>
        <dbReference type="HAMAP-Rule" id="MF_01855"/>
    </source>
</evidence>
<reference key="1">
    <citation type="journal article" date="2005" name="Nucleic Acids Res.">
        <title>Genomic blueprint of Hahella chejuensis, a marine microbe producing an algicidal agent.</title>
        <authorList>
            <person name="Jeong H."/>
            <person name="Yim J.H."/>
            <person name="Lee C."/>
            <person name="Choi S.-H."/>
            <person name="Park Y.K."/>
            <person name="Yoon S.H."/>
            <person name="Hur C.-G."/>
            <person name="Kang H.-Y."/>
            <person name="Kim D."/>
            <person name="Lee H.H."/>
            <person name="Park K.H."/>
            <person name="Park S.-H."/>
            <person name="Park H.-S."/>
            <person name="Lee H.K."/>
            <person name="Oh T.K."/>
            <person name="Kim J.F."/>
        </authorList>
    </citation>
    <scope>NUCLEOTIDE SEQUENCE [LARGE SCALE GENOMIC DNA]</scope>
    <source>
        <strain>KCTC 2396</strain>
    </source>
</reference>
<protein>
    <recommendedName>
        <fullName evidence="1">Fructose-1,6-bisphosphatase class 1</fullName>
        <shortName evidence="1">FBPase class 1</shortName>
        <ecNumber evidence="1">3.1.3.11</ecNumber>
    </recommendedName>
    <alternativeName>
        <fullName evidence="1">D-fructose-1,6-bisphosphate 1-phosphohydrolase class 1</fullName>
    </alternativeName>
</protein>